<accession>Q10070</accession>
<name>MDM31_SCHPO</name>
<evidence type="ECO:0000250" key="1"/>
<evidence type="ECO:0000255" key="2"/>
<evidence type="ECO:0000305" key="3"/>
<reference key="1">
    <citation type="journal article" date="2002" name="Nature">
        <title>The genome sequence of Schizosaccharomyces pombe.</title>
        <authorList>
            <person name="Wood V."/>
            <person name="Gwilliam R."/>
            <person name="Rajandream M.A."/>
            <person name="Lyne M.H."/>
            <person name="Lyne R."/>
            <person name="Stewart A."/>
            <person name="Sgouros J.G."/>
            <person name="Peat N."/>
            <person name="Hayles J."/>
            <person name="Baker S.G."/>
            <person name="Basham D."/>
            <person name="Bowman S."/>
            <person name="Brooks K."/>
            <person name="Brown D."/>
            <person name="Brown S."/>
            <person name="Chillingworth T."/>
            <person name="Churcher C.M."/>
            <person name="Collins M."/>
            <person name="Connor R."/>
            <person name="Cronin A."/>
            <person name="Davis P."/>
            <person name="Feltwell T."/>
            <person name="Fraser A."/>
            <person name="Gentles S."/>
            <person name="Goble A."/>
            <person name="Hamlin N."/>
            <person name="Harris D.E."/>
            <person name="Hidalgo J."/>
            <person name="Hodgson G."/>
            <person name="Holroyd S."/>
            <person name="Hornsby T."/>
            <person name="Howarth S."/>
            <person name="Huckle E.J."/>
            <person name="Hunt S."/>
            <person name="Jagels K."/>
            <person name="James K.D."/>
            <person name="Jones L."/>
            <person name="Jones M."/>
            <person name="Leather S."/>
            <person name="McDonald S."/>
            <person name="McLean J."/>
            <person name="Mooney P."/>
            <person name="Moule S."/>
            <person name="Mungall K.L."/>
            <person name="Murphy L.D."/>
            <person name="Niblett D."/>
            <person name="Odell C."/>
            <person name="Oliver K."/>
            <person name="O'Neil S."/>
            <person name="Pearson D."/>
            <person name="Quail M.A."/>
            <person name="Rabbinowitsch E."/>
            <person name="Rutherford K.M."/>
            <person name="Rutter S."/>
            <person name="Saunders D."/>
            <person name="Seeger K."/>
            <person name="Sharp S."/>
            <person name="Skelton J."/>
            <person name="Simmonds M.N."/>
            <person name="Squares R."/>
            <person name="Squares S."/>
            <person name="Stevens K."/>
            <person name="Taylor K."/>
            <person name="Taylor R.G."/>
            <person name="Tivey A."/>
            <person name="Walsh S.V."/>
            <person name="Warren T."/>
            <person name="Whitehead S."/>
            <person name="Woodward J.R."/>
            <person name="Volckaert G."/>
            <person name="Aert R."/>
            <person name="Robben J."/>
            <person name="Grymonprez B."/>
            <person name="Weltjens I."/>
            <person name="Vanstreels E."/>
            <person name="Rieger M."/>
            <person name="Schaefer M."/>
            <person name="Mueller-Auer S."/>
            <person name="Gabel C."/>
            <person name="Fuchs M."/>
            <person name="Duesterhoeft A."/>
            <person name="Fritzc C."/>
            <person name="Holzer E."/>
            <person name="Moestl D."/>
            <person name="Hilbert H."/>
            <person name="Borzym K."/>
            <person name="Langer I."/>
            <person name="Beck A."/>
            <person name="Lehrach H."/>
            <person name="Reinhardt R."/>
            <person name="Pohl T.M."/>
            <person name="Eger P."/>
            <person name="Zimmermann W."/>
            <person name="Wedler H."/>
            <person name="Wambutt R."/>
            <person name="Purnelle B."/>
            <person name="Goffeau A."/>
            <person name="Cadieu E."/>
            <person name="Dreano S."/>
            <person name="Gloux S."/>
            <person name="Lelaure V."/>
            <person name="Mottier S."/>
            <person name="Galibert F."/>
            <person name="Aves S.J."/>
            <person name="Xiang Z."/>
            <person name="Hunt C."/>
            <person name="Moore K."/>
            <person name="Hurst S.M."/>
            <person name="Lucas M."/>
            <person name="Rochet M."/>
            <person name="Gaillardin C."/>
            <person name="Tallada V.A."/>
            <person name="Garzon A."/>
            <person name="Thode G."/>
            <person name="Daga R.R."/>
            <person name="Cruzado L."/>
            <person name="Jimenez J."/>
            <person name="Sanchez M."/>
            <person name="del Rey F."/>
            <person name="Benito J."/>
            <person name="Dominguez A."/>
            <person name="Revuelta J.L."/>
            <person name="Moreno S."/>
            <person name="Armstrong J."/>
            <person name="Forsburg S.L."/>
            <person name="Cerutti L."/>
            <person name="Lowe T."/>
            <person name="McCombie W.R."/>
            <person name="Paulsen I."/>
            <person name="Potashkin J."/>
            <person name="Shpakovski G.V."/>
            <person name="Ussery D."/>
            <person name="Barrell B.G."/>
            <person name="Nurse P."/>
        </authorList>
    </citation>
    <scope>NUCLEOTIDE SEQUENCE [LARGE SCALE GENOMIC DNA]</scope>
    <source>
        <strain>972 / ATCC 24843</strain>
    </source>
</reference>
<reference key="2">
    <citation type="journal article" date="2006" name="Nat. Biotechnol.">
        <title>ORFeome cloning and global analysis of protein localization in the fission yeast Schizosaccharomyces pombe.</title>
        <authorList>
            <person name="Matsuyama A."/>
            <person name="Arai R."/>
            <person name="Yashiroda Y."/>
            <person name="Shirai A."/>
            <person name="Kamata A."/>
            <person name="Sekido S."/>
            <person name="Kobayashi Y."/>
            <person name="Hashimoto A."/>
            <person name="Hamamoto M."/>
            <person name="Hiraoka Y."/>
            <person name="Horinouchi S."/>
            <person name="Yoshida M."/>
        </authorList>
    </citation>
    <scope>SUBCELLULAR LOCATION [LARGE SCALE ANALYSIS]</scope>
</reference>
<feature type="transit peptide" description="Mitochondrion" evidence="2">
    <location>
        <begin position="1"/>
        <end position="66"/>
    </location>
</feature>
<feature type="chain" id="PRO_0000116447" description="Mitochondrial distribution and morphology protein 31">
    <location>
        <begin position="67"/>
        <end position="601"/>
    </location>
</feature>
<feature type="topological domain" description="Mitochondrial matrix" evidence="2">
    <location>
        <begin position="67"/>
        <end position="134"/>
    </location>
</feature>
<feature type="transmembrane region" description="Helical" evidence="2">
    <location>
        <begin position="135"/>
        <end position="155"/>
    </location>
</feature>
<feature type="topological domain" description="Mitochondrial intermembrane" evidence="2">
    <location>
        <begin position="156"/>
        <end position="601"/>
    </location>
</feature>
<organism>
    <name type="scientific">Schizosaccharomyces pombe (strain 972 / ATCC 24843)</name>
    <name type="common">Fission yeast</name>
    <dbReference type="NCBI Taxonomy" id="284812"/>
    <lineage>
        <taxon>Eukaryota</taxon>
        <taxon>Fungi</taxon>
        <taxon>Dikarya</taxon>
        <taxon>Ascomycota</taxon>
        <taxon>Taphrinomycotina</taxon>
        <taxon>Schizosaccharomycetes</taxon>
        <taxon>Schizosaccharomycetales</taxon>
        <taxon>Schizosaccharomycetaceae</taxon>
        <taxon>Schizosaccharomyces</taxon>
    </lineage>
</organism>
<sequence>MLESRLAKNIARIVQARKPYLISYHVRASTQNALLKQTVLQSSSFKSFPTLPRLAARNISNSGILSRTTPVIIKQISMVRSYSSGDVENPEILNKNESNQSSGVKRAMPFRVLKKMKSFLFKQNKPLTVDNVTAFFSWWLVSHIVWIVVGTTTFFSLLLYTLNTVSAQELLGRWIGQLMTKNTGFQFVFESAIVPNWRKGLITFNKISVIRRPDTLNGIGAQNPNNKSDYEKEYMALRKRYDSNEEPDTEALSQGNYTQFELSIDKADVSFSFARFLNGKGIVKELQLKGVRGVVDRRFIEWDPSSDPRDYRRKHNWGDFEIEKFKLEDLRVTLLQPKGFRKFPVSVFFCELPRLRKQWLFYDLMNAKTLTGSFDNSMFTIHRLQLRPYSPYLKVGKQLDDMRHSRLRIDNVAIDHLNRGVSGAFGWINDGSVDFLVNISFPSEPSENSFQKAWISLMDKLKKKEKDEDVYKDVHFDVNVQLHNPKAVIPIFTNQVSYINNALIRPIIAYINSTRTFIPILCHVSKPLSDFDGSWTFYDSGVLQEISAQVYESFARDVLNQEIRRKRIQKVGYWSLRRFLHLVLVSLQELAPTTSSISNFE</sequence>
<gene>
    <name type="primary">mdm31</name>
    <name type="ORF">SPAC3H1.04c</name>
</gene>
<keyword id="KW-0472">Membrane</keyword>
<keyword id="KW-0496">Mitochondrion</keyword>
<keyword id="KW-0999">Mitochondrion inner membrane</keyword>
<keyword id="KW-1185">Reference proteome</keyword>
<keyword id="KW-0809">Transit peptide</keyword>
<keyword id="KW-0812">Transmembrane</keyword>
<keyword id="KW-1133">Transmembrane helix</keyword>
<dbReference type="EMBL" id="CU329670">
    <property type="protein sequence ID" value="CAA92257.1"/>
    <property type="molecule type" value="Genomic_DNA"/>
</dbReference>
<dbReference type="PIR" id="T38736">
    <property type="entry name" value="T38736"/>
</dbReference>
<dbReference type="RefSeq" id="NP_593546.1">
    <property type="nucleotide sequence ID" value="NM_001018979.2"/>
</dbReference>
<dbReference type="BioGRID" id="279842">
    <property type="interactions" value="32"/>
</dbReference>
<dbReference type="FunCoup" id="Q10070">
    <property type="interactions" value="45"/>
</dbReference>
<dbReference type="STRING" id="284812.Q10070"/>
<dbReference type="PaxDb" id="4896-SPAC3H1.04c.1"/>
<dbReference type="EnsemblFungi" id="SPAC3H1.04c.1">
    <property type="protein sequence ID" value="SPAC3H1.04c.1:pep"/>
    <property type="gene ID" value="SPAC3H1.04c"/>
</dbReference>
<dbReference type="GeneID" id="2543420"/>
<dbReference type="KEGG" id="spo:2543420"/>
<dbReference type="PomBase" id="SPAC3H1.04c">
    <property type="gene designation" value="mdm31"/>
</dbReference>
<dbReference type="VEuPathDB" id="FungiDB:SPAC3H1.04c"/>
<dbReference type="eggNOG" id="ENOG502QQJG">
    <property type="taxonomic scope" value="Eukaryota"/>
</dbReference>
<dbReference type="HOGENOM" id="CLU_016236_2_1_1"/>
<dbReference type="InParanoid" id="Q10070"/>
<dbReference type="OMA" id="AFFSWWL"/>
<dbReference type="PhylomeDB" id="Q10070"/>
<dbReference type="PRO" id="PR:Q10070"/>
<dbReference type="Proteomes" id="UP000002485">
    <property type="component" value="Chromosome I"/>
</dbReference>
<dbReference type="GO" id="GO:0005743">
    <property type="term" value="C:mitochondrial inner membrane"/>
    <property type="evidence" value="ECO:0000318"/>
    <property type="project" value="GO_Central"/>
</dbReference>
<dbReference type="GO" id="GO:0005739">
    <property type="term" value="C:mitochondrion"/>
    <property type="evidence" value="ECO:0000314"/>
    <property type="project" value="PomBase"/>
</dbReference>
<dbReference type="GO" id="GO:0000001">
    <property type="term" value="P:mitochondrion inheritance"/>
    <property type="evidence" value="ECO:0007669"/>
    <property type="project" value="InterPro"/>
</dbReference>
<dbReference type="GO" id="GO:0007005">
    <property type="term" value="P:mitochondrion organization"/>
    <property type="evidence" value="ECO:0000318"/>
    <property type="project" value="GO_Central"/>
</dbReference>
<dbReference type="InterPro" id="IPR012571">
    <property type="entry name" value="Mdm31/Mdm32"/>
</dbReference>
<dbReference type="PANTHER" id="PTHR31068">
    <property type="entry name" value="MITOCHONDRIAL DISTRIBUTION AND MORPHOLOGY PROTEIN 31"/>
    <property type="match status" value="1"/>
</dbReference>
<dbReference type="PANTHER" id="PTHR31068:SF0">
    <property type="entry name" value="MITOCHONDRIAL DISTRIBUTION AND MORPHOLOGY PROTEIN 31"/>
    <property type="match status" value="1"/>
</dbReference>
<dbReference type="Pfam" id="PF08118">
    <property type="entry name" value="MDM31_MDM32"/>
    <property type="match status" value="2"/>
</dbReference>
<proteinExistence type="inferred from homology"/>
<protein>
    <recommendedName>
        <fullName>Mitochondrial distribution and morphology protein 31</fullName>
    </recommendedName>
</protein>
<comment type="function">
    <text evidence="1">Involved in the organization of the mitochondrial membranes and the global structure of the mitochondria. Also required for mitochondrial distribution and mobility as well as for the maintenance of mitochondrial DNA nucleoids structures (By similarity).</text>
</comment>
<comment type="subcellular location">
    <subcellularLocation>
        <location evidence="3">Mitochondrion inner membrane</location>
        <topology evidence="3">Single-pass membrane protein</topology>
    </subcellularLocation>
</comment>
<comment type="similarity">
    <text evidence="3">Belongs to the MDM31/MDM32 family.</text>
</comment>